<keyword id="KW-0663">Pyridoxal phosphate</keyword>
<keyword id="KW-0808">Transferase</keyword>
<name>SBNA_STAAD</name>
<comment type="function">
    <text evidence="1">Catalyzes the synthesis of N-((2S)-2-amino-2-carboxyethyl)-L-glutamate (ACEGA) from O-phospho-L-serine and L-glutamate. Involved in the biosynthesis of L-2,3-diaminopropionic acid (L-Dap), a precursor of staphyloferrin B and antibiotics.</text>
</comment>
<comment type="catalytic activity">
    <reaction evidence="1">
        <text>O-phospho-L-serine + L-glutamate = N-[(2S)-2-amino-2-carboxyethyl]-L-glutamate + phosphate + H(+)</text>
        <dbReference type="Rhea" id="RHEA:52384"/>
        <dbReference type="ChEBI" id="CHEBI:15378"/>
        <dbReference type="ChEBI" id="CHEBI:29985"/>
        <dbReference type="ChEBI" id="CHEBI:43474"/>
        <dbReference type="ChEBI" id="CHEBI:57524"/>
        <dbReference type="ChEBI" id="CHEBI:134610"/>
        <dbReference type="EC" id="2.5.1.140"/>
    </reaction>
</comment>
<comment type="cofactor">
    <cofactor evidence="1">
        <name>pyridoxal 5'-phosphate</name>
        <dbReference type="ChEBI" id="CHEBI:597326"/>
    </cofactor>
</comment>
<comment type="pathway">
    <text evidence="1">Siderophore biosynthesis.</text>
</comment>
<comment type="subunit">
    <text evidence="1">Homodimer.</text>
</comment>
<comment type="induction">
    <text evidence="2">Up-regulated under iron-deficient growth conditions. Repressed by Fur under iron-rich growth conditions.</text>
</comment>
<comment type="similarity">
    <text evidence="3">Belongs to the cysteine synthase/cystathionine beta-synthase family. SbnA subfamily.</text>
</comment>
<comment type="sequence caution" evidence="3">
    <conflict type="erroneous initiation">
        <sequence resource="EMBL-CDS" id="ACY10031"/>
    </conflict>
    <text>Truncated N-terminus.</text>
</comment>
<reference key="1">
    <citation type="journal article" date="2009" name="Proc. Natl. Acad. Sci. U.S.A.">
        <title>Recent human-to-poultry host jump, adaptation, and pandemic spread of Staphylococcus aureus.</title>
        <authorList>
            <person name="Lowder B.V."/>
            <person name="Guinane C.M."/>
            <person name="Ben Zakour N.L."/>
            <person name="Weinert L.A."/>
            <person name="Conway-Morris A."/>
            <person name="Cartwright R.A."/>
            <person name="Simpson A.J."/>
            <person name="Rambaut A."/>
            <person name="Nubel U."/>
            <person name="Fitzgerald J.R."/>
        </authorList>
    </citation>
    <scope>NUCLEOTIDE SEQUENCE [LARGE SCALE GENOMIC DNA]</scope>
    <source>
        <strain>ED98</strain>
    </source>
</reference>
<proteinExistence type="inferred from homology"/>
<evidence type="ECO:0000250" key="1">
    <source>
        <dbReference type="UniProtKB" id="A6QDA0"/>
    </source>
</evidence>
<evidence type="ECO:0000250" key="2">
    <source>
        <dbReference type="UniProtKB" id="Q2G1N3"/>
    </source>
</evidence>
<evidence type="ECO:0000305" key="3"/>
<gene>
    <name type="primary">sbnA</name>
    <name type="ordered locus">SAAV_0084</name>
</gene>
<dbReference type="EC" id="2.5.1.140" evidence="1"/>
<dbReference type="EMBL" id="CP001781">
    <property type="protein sequence ID" value="ACY10031.1"/>
    <property type="status" value="ALT_INIT"/>
    <property type="molecule type" value="Genomic_DNA"/>
</dbReference>
<dbReference type="RefSeq" id="WP_000570808.1">
    <property type="nucleotide sequence ID" value="NC_013450.1"/>
</dbReference>
<dbReference type="SMR" id="D0K799"/>
<dbReference type="KEGG" id="sad:SAAV_0084"/>
<dbReference type="HOGENOM" id="CLU_021018_1_0_9"/>
<dbReference type="GO" id="GO:0016765">
    <property type="term" value="F:transferase activity, transferring alkyl or aryl (other than methyl) groups"/>
    <property type="evidence" value="ECO:0007669"/>
    <property type="project" value="UniProtKB-ARBA"/>
</dbReference>
<dbReference type="GO" id="GO:0006535">
    <property type="term" value="P:cysteine biosynthetic process from serine"/>
    <property type="evidence" value="ECO:0007669"/>
    <property type="project" value="InterPro"/>
</dbReference>
<dbReference type="CDD" id="cd01561">
    <property type="entry name" value="CBS_like"/>
    <property type="match status" value="1"/>
</dbReference>
<dbReference type="Gene3D" id="3.40.50.1100">
    <property type="match status" value="2"/>
</dbReference>
<dbReference type="InterPro" id="IPR050214">
    <property type="entry name" value="Cys_Synth/Cystath_Beta-Synth"/>
</dbReference>
<dbReference type="InterPro" id="IPR001216">
    <property type="entry name" value="P-phosphate_BS"/>
</dbReference>
<dbReference type="InterPro" id="IPR023927">
    <property type="entry name" value="SbnA"/>
</dbReference>
<dbReference type="InterPro" id="IPR001926">
    <property type="entry name" value="TrpB-like_PALP"/>
</dbReference>
<dbReference type="InterPro" id="IPR036052">
    <property type="entry name" value="TrpB-like_PALP_sf"/>
</dbReference>
<dbReference type="NCBIfam" id="TIGR03945">
    <property type="entry name" value="PLP_SbnA_fam"/>
    <property type="match status" value="1"/>
</dbReference>
<dbReference type="PANTHER" id="PTHR10314">
    <property type="entry name" value="CYSTATHIONINE BETA-SYNTHASE"/>
    <property type="match status" value="1"/>
</dbReference>
<dbReference type="Pfam" id="PF00291">
    <property type="entry name" value="PALP"/>
    <property type="match status" value="1"/>
</dbReference>
<dbReference type="SUPFAM" id="SSF53686">
    <property type="entry name" value="Tryptophan synthase beta subunit-like PLP-dependent enzymes"/>
    <property type="match status" value="1"/>
</dbReference>
<dbReference type="PROSITE" id="PS00901">
    <property type="entry name" value="CYS_SYNTHASE"/>
    <property type="match status" value="1"/>
</dbReference>
<organism>
    <name type="scientific">Staphylococcus aureus (strain ED98)</name>
    <dbReference type="NCBI Taxonomy" id="681288"/>
    <lineage>
        <taxon>Bacteria</taxon>
        <taxon>Bacillati</taxon>
        <taxon>Bacillota</taxon>
        <taxon>Bacilli</taxon>
        <taxon>Bacillales</taxon>
        <taxon>Staphylococcaceae</taxon>
        <taxon>Staphylococcus</taxon>
    </lineage>
</organism>
<feature type="chain" id="PRO_0000395013" description="N-(2-amino-2-carboxyethyl)-L-glutamate synthase">
    <location>
        <begin position="1"/>
        <end position="326"/>
    </location>
</feature>
<feature type="binding site" evidence="1">
    <location>
        <position position="77"/>
    </location>
    <ligand>
        <name>pyridoxal 5'-phosphate</name>
        <dbReference type="ChEBI" id="CHEBI:597326"/>
    </ligand>
</feature>
<feature type="binding site" evidence="1">
    <location>
        <begin position="185"/>
        <end position="189"/>
    </location>
    <ligand>
        <name>pyridoxal 5'-phosphate</name>
        <dbReference type="ChEBI" id="CHEBI:597326"/>
    </ligand>
</feature>
<feature type="binding site" evidence="1">
    <location>
        <position position="272"/>
    </location>
    <ligand>
        <name>pyridoxal 5'-phosphate</name>
        <dbReference type="ChEBI" id="CHEBI:597326"/>
    </ligand>
</feature>
<feature type="modified residue" description="N6-(pyridoxal phosphate)lysine" evidence="1">
    <location>
        <position position="47"/>
    </location>
</feature>
<accession>D0K799</accession>
<sequence length="326" mass="35897">MIEKSQACHDSLLDSVGQTPMVQLHQLFPKHEVFAKLEYMNPGGSMKDRPAKYIIEHGIKHGLITENTHLIESTSGNLGIALAMIAKIKGLKLTCVVDPKISPTNLKIIKSYGANVEMVEEPDAHGGYLMTRIAKVQELLATIDDAYWINQYANELNWQSHYHGAGTEIVETIKQPIDYFVAPVSTTGSIMGMSRKIKEVHPNAQIVAVDAKGSVIFGDKPINRELPGIGASRVPEILNRSEINQVIHVDDYQSALGCRKLIDYEGIFAGGSTGSIIAAIEQLITSIEEGATIVTILPDRGDRYLDLVYSDTWLEKMKSRQGVKSE</sequence>
<protein>
    <recommendedName>
        <fullName evidence="3">N-(2-amino-2-carboxyethyl)-L-glutamate synthase</fullName>
        <shortName evidence="3">ACEGA synthase</shortName>
        <ecNumber evidence="1">2.5.1.140</ecNumber>
    </recommendedName>
</protein>